<proteinExistence type="inferred from homology"/>
<reference key="1">
    <citation type="submission" date="2006-12" db="EMBL/GenBank/DDBJ databases">
        <authorList>
            <person name="Fouts D.E."/>
            <person name="Nelson K.E."/>
            <person name="Sebastian Y."/>
        </authorList>
    </citation>
    <scope>NUCLEOTIDE SEQUENCE [LARGE SCALE GENOMIC DNA]</scope>
    <source>
        <strain>81-176</strain>
    </source>
</reference>
<dbReference type="EMBL" id="CP000538">
    <property type="protein sequence ID" value="EAQ72800.1"/>
    <property type="molecule type" value="Genomic_DNA"/>
</dbReference>
<dbReference type="RefSeq" id="WP_002856384.1">
    <property type="nucleotide sequence ID" value="NC_008787.1"/>
</dbReference>
<dbReference type="SMR" id="A1W1V8"/>
<dbReference type="KEGG" id="cjj:CJJ81176_1702"/>
<dbReference type="eggNOG" id="COG0089">
    <property type="taxonomic scope" value="Bacteria"/>
</dbReference>
<dbReference type="HOGENOM" id="CLU_037562_3_1_7"/>
<dbReference type="Proteomes" id="UP000000646">
    <property type="component" value="Chromosome"/>
</dbReference>
<dbReference type="GO" id="GO:1990904">
    <property type="term" value="C:ribonucleoprotein complex"/>
    <property type="evidence" value="ECO:0007669"/>
    <property type="project" value="UniProtKB-KW"/>
</dbReference>
<dbReference type="GO" id="GO:0005840">
    <property type="term" value="C:ribosome"/>
    <property type="evidence" value="ECO:0007669"/>
    <property type="project" value="UniProtKB-KW"/>
</dbReference>
<dbReference type="GO" id="GO:0019843">
    <property type="term" value="F:rRNA binding"/>
    <property type="evidence" value="ECO:0007669"/>
    <property type="project" value="UniProtKB-UniRule"/>
</dbReference>
<dbReference type="GO" id="GO:0003735">
    <property type="term" value="F:structural constituent of ribosome"/>
    <property type="evidence" value="ECO:0007669"/>
    <property type="project" value="InterPro"/>
</dbReference>
<dbReference type="GO" id="GO:0006412">
    <property type="term" value="P:translation"/>
    <property type="evidence" value="ECO:0007669"/>
    <property type="project" value="UniProtKB-UniRule"/>
</dbReference>
<dbReference type="Gene3D" id="3.30.70.330">
    <property type="match status" value="1"/>
</dbReference>
<dbReference type="HAMAP" id="MF_01369_B">
    <property type="entry name" value="Ribosomal_uL23_B"/>
    <property type="match status" value="1"/>
</dbReference>
<dbReference type="InterPro" id="IPR012677">
    <property type="entry name" value="Nucleotide-bd_a/b_plait_sf"/>
</dbReference>
<dbReference type="InterPro" id="IPR013025">
    <property type="entry name" value="Ribosomal_uL23-like"/>
</dbReference>
<dbReference type="InterPro" id="IPR012678">
    <property type="entry name" value="Ribosomal_uL23/eL15/eS24_sf"/>
</dbReference>
<dbReference type="NCBIfam" id="NF004362">
    <property type="entry name" value="PRK05738.2-2"/>
    <property type="match status" value="1"/>
</dbReference>
<dbReference type="Pfam" id="PF00276">
    <property type="entry name" value="Ribosomal_L23"/>
    <property type="match status" value="1"/>
</dbReference>
<dbReference type="SUPFAM" id="SSF54189">
    <property type="entry name" value="Ribosomal proteins S24e, L23 and L15e"/>
    <property type="match status" value="1"/>
</dbReference>
<accession>A1W1V8</accession>
<feature type="chain" id="PRO_1000068055" description="Large ribosomal subunit protein uL23">
    <location>
        <begin position="1"/>
        <end position="93"/>
    </location>
</feature>
<protein>
    <recommendedName>
        <fullName evidence="1">Large ribosomal subunit protein uL23</fullName>
    </recommendedName>
    <alternativeName>
        <fullName evidence="2">50S ribosomal protein L23</fullName>
    </alternativeName>
</protein>
<comment type="function">
    <text evidence="1">One of the early assembly proteins it binds 23S rRNA. One of the proteins that surrounds the polypeptide exit tunnel on the outside of the ribosome. Forms the main docking site for trigger factor binding to the ribosome.</text>
</comment>
<comment type="subunit">
    <text evidence="1">Part of the 50S ribosomal subunit. Contacts protein L29, and trigger factor when it is bound to the ribosome.</text>
</comment>
<comment type="similarity">
    <text evidence="1">Belongs to the universal ribosomal protein uL23 family.</text>
</comment>
<organism>
    <name type="scientific">Campylobacter jejuni subsp. jejuni serotype O:23/36 (strain 81-176)</name>
    <dbReference type="NCBI Taxonomy" id="354242"/>
    <lineage>
        <taxon>Bacteria</taxon>
        <taxon>Pseudomonadati</taxon>
        <taxon>Campylobacterota</taxon>
        <taxon>Epsilonproteobacteria</taxon>
        <taxon>Campylobacterales</taxon>
        <taxon>Campylobacteraceae</taxon>
        <taxon>Campylobacter</taxon>
    </lineage>
</organism>
<name>RL23_CAMJJ</name>
<evidence type="ECO:0000255" key="1">
    <source>
        <dbReference type="HAMAP-Rule" id="MF_01369"/>
    </source>
</evidence>
<evidence type="ECO:0000305" key="2"/>
<keyword id="KW-0687">Ribonucleoprotein</keyword>
<keyword id="KW-0689">Ribosomal protein</keyword>
<keyword id="KW-0694">RNA-binding</keyword>
<keyword id="KW-0699">rRNA-binding</keyword>
<gene>
    <name evidence="1" type="primary">rplW</name>
    <name type="ordered locus">CJJ81176_1702</name>
</gene>
<sequence length="93" mass="10554">MADITDIKTILYTEKSLNLQEQGVVVIQTSPKMTKTGLKAVLKEYFGVTPKSINSLRMDGKVKRFRGRLGQRNDYKKFYVKLPEGVSLENTEA</sequence>